<organism>
    <name type="scientific">Christiangramia forsetii (strain DSM 17595 / CGMCC 1.15422 / KT0803)</name>
    <name type="common">Gramella forsetii</name>
    <dbReference type="NCBI Taxonomy" id="411154"/>
    <lineage>
        <taxon>Bacteria</taxon>
        <taxon>Pseudomonadati</taxon>
        <taxon>Bacteroidota</taxon>
        <taxon>Flavobacteriia</taxon>
        <taxon>Flavobacteriales</taxon>
        <taxon>Flavobacteriaceae</taxon>
        <taxon>Christiangramia</taxon>
    </lineage>
</organism>
<evidence type="ECO:0000255" key="1">
    <source>
        <dbReference type="HAMAP-Rule" id="MF_00658"/>
    </source>
</evidence>
<feature type="chain" id="PRO_1000061786" description="Ribosomal RNA large subunit methyltransferase H">
    <location>
        <begin position="1"/>
        <end position="157"/>
    </location>
</feature>
<feature type="binding site" evidence="1">
    <location>
        <position position="73"/>
    </location>
    <ligand>
        <name>S-adenosyl-L-methionine</name>
        <dbReference type="ChEBI" id="CHEBI:59789"/>
    </ligand>
</feature>
<feature type="binding site" evidence="1">
    <location>
        <position position="105"/>
    </location>
    <ligand>
        <name>S-adenosyl-L-methionine</name>
        <dbReference type="ChEBI" id="CHEBI:59789"/>
    </ligand>
</feature>
<feature type="binding site" evidence="1">
    <location>
        <begin position="124"/>
        <end position="129"/>
    </location>
    <ligand>
        <name>S-adenosyl-L-methionine</name>
        <dbReference type="ChEBI" id="CHEBI:59789"/>
    </ligand>
</feature>
<accession>A0M0D0</accession>
<reference key="1">
    <citation type="journal article" date="2006" name="Environ. Microbiol.">
        <title>Whole genome analysis of the marine Bacteroidetes'Gramella forsetii' reveals adaptations to degradation of polymeric organic matter.</title>
        <authorList>
            <person name="Bauer M."/>
            <person name="Kube M."/>
            <person name="Teeling H."/>
            <person name="Richter M."/>
            <person name="Lombardot T."/>
            <person name="Allers E."/>
            <person name="Wuerdemann C.A."/>
            <person name="Quast C."/>
            <person name="Kuhl H."/>
            <person name="Knaust F."/>
            <person name="Woebken D."/>
            <person name="Bischof K."/>
            <person name="Mussmann M."/>
            <person name="Choudhuri J.V."/>
            <person name="Meyer F."/>
            <person name="Reinhardt R."/>
            <person name="Amann R.I."/>
            <person name="Gloeckner F.O."/>
        </authorList>
    </citation>
    <scope>NUCLEOTIDE SEQUENCE [LARGE SCALE GENOMIC DNA]</scope>
    <source>
        <strain>DSM 17595 / CGMCC 1.15422 / KT0803</strain>
    </source>
</reference>
<name>RLMH_CHRFK</name>
<comment type="function">
    <text evidence="1">Specifically methylates the pseudouridine at position 1915 (m3Psi1915) in 23S rRNA.</text>
</comment>
<comment type="catalytic activity">
    <reaction evidence="1">
        <text>pseudouridine(1915) in 23S rRNA + S-adenosyl-L-methionine = N(3)-methylpseudouridine(1915) in 23S rRNA + S-adenosyl-L-homocysteine + H(+)</text>
        <dbReference type="Rhea" id="RHEA:42752"/>
        <dbReference type="Rhea" id="RHEA-COMP:10221"/>
        <dbReference type="Rhea" id="RHEA-COMP:10222"/>
        <dbReference type="ChEBI" id="CHEBI:15378"/>
        <dbReference type="ChEBI" id="CHEBI:57856"/>
        <dbReference type="ChEBI" id="CHEBI:59789"/>
        <dbReference type="ChEBI" id="CHEBI:65314"/>
        <dbReference type="ChEBI" id="CHEBI:74486"/>
        <dbReference type="EC" id="2.1.1.177"/>
    </reaction>
</comment>
<comment type="subunit">
    <text evidence="1">Homodimer.</text>
</comment>
<comment type="subcellular location">
    <subcellularLocation>
        <location evidence="1">Cytoplasm</location>
    </subcellularLocation>
</comment>
<comment type="similarity">
    <text evidence="1">Belongs to the RNA methyltransferase RlmH family.</text>
</comment>
<protein>
    <recommendedName>
        <fullName evidence="1">Ribosomal RNA large subunit methyltransferase H</fullName>
        <ecNumber evidence="1">2.1.1.177</ecNumber>
    </recommendedName>
    <alternativeName>
        <fullName evidence="1">23S rRNA (pseudouridine1915-N3)-methyltransferase</fullName>
    </alternativeName>
    <alternativeName>
        <fullName evidence="1">23S rRNA m3Psi1915 methyltransferase</fullName>
    </alternativeName>
    <alternativeName>
        <fullName evidence="1">rRNA (pseudouridine-N3-)-methyltransferase RlmH</fullName>
    </alternativeName>
</protein>
<keyword id="KW-0963">Cytoplasm</keyword>
<keyword id="KW-0489">Methyltransferase</keyword>
<keyword id="KW-0698">rRNA processing</keyword>
<keyword id="KW-0949">S-adenosyl-L-methionine</keyword>
<keyword id="KW-0808">Transferase</keyword>
<gene>
    <name evidence="1" type="primary">rlmH</name>
    <name type="ordered locus">GFO_1101</name>
</gene>
<dbReference type="EC" id="2.1.1.177" evidence="1"/>
<dbReference type="EMBL" id="CU207366">
    <property type="protein sequence ID" value="CAL66075.1"/>
    <property type="molecule type" value="Genomic_DNA"/>
</dbReference>
<dbReference type="RefSeq" id="WP_011708994.1">
    <property type="nucleotide sequence ID" value="NC_008571.1"/>
</dbReference>
<dbReference type="SMR" id="A0M0D0"/>
<dbReference type="STRING" id="411154.GFO_1101"/>
<dbReference type="KEGG" id="gfo:GFO_1101"/>
<dbReference type="eggNOG" id="COG1576">
    <property type="taxonomic scope" value="Bacteria"/>
</dbReference>
<dbReference type="HOGENOM" id="CLU_100552_2_0_10"/>
<dbReference type="OrthoDB" id="9806643at2"/>
<dbReference type="Proteomes" id="UP000000755">
    <property type="component" value="Chromosome"/>
</dbReference>
<dbReference type="GO" id="GO:0005737">
    <property type="term" value="C:cytoplasm"/>
    <property type="evidence" value="ECO:0007669"/>
    <property type="project" value="UniProtKB-SubCell"/>
</dbReference>
<dbReference type="GO" id="GO:0070038">
    <property type="term" value="F:rRNA (pseudouridine-N3-)-methyltransferase activity"/>
    <property type="evidence" value="ECO:0007669"/>
    <property type="project" value="UniProtKB-UniRule"/>
</dbReference>
<dbReference type="CDD" id="cd18081">
    <property type="entry name" value="RlmH-like"/>
    <property type="match status" value="1"/>
</dbReference>
<dbReference type="Gene3D" id="3.40.1280.10">
    <property type="match status" value="1"/>
</dbReference>
<dbReference type="HAMAP" id="MF_00658">
    <property type="entry name" value="23SrRNA_methyltr_H"/>
    <property type="match status" value="1"/>
</dbReference>
<dbReference type="InterPro" id="IPR029028">
    <property type="entry name" value="Alpha/beta_knot_MTases"/>
</dbReference>
<dbReference type="InterPro" id="IPR003742">
    <property type="entry name" value="RlmH-like"/>
</dbReference>
<dbReference type="InterPro" id="IPR029026">
    <property type="entry name" value="tRNA_m1G_MTases_N"/>
</dbReference>
<dbReference type="NCBIfam" id="NF000990">
    <property type="entry name" value="PRK00103.2-4"/>
    <property type="match status" value="1"/>
</dbReference>
<dbReference type="PANTHER" id="PTHR33603">
    <property type="entry name" value="METHYLTRANSFERASE"/>
    <property type="match status" value="1"/>
</dbReference>
<dbReference type="PANTHER" id="PTHR33603:SF1">
    <property type="entry name" value="RIBOSOMAL RNA LARGE SUBUNIT METHYLTRANSFERASE H"/>
    <property type="match status" value="1"/>
</dbReference>
<dbReference type="Pfam" id="PF02590">
    <property type="entry name" value="SPOUT_MTase"/>
    <property type="match status" value="1"/>
</dbReference>
<dbReference type="PIRSF" id="PIRSF004505">
    <property type="entry name" value="MT_bac"/>
    <property type="match status" value="1"/>
</dbReference>
<dbReference type="SUPFAM" id="SSF75217">
    <property type="entry name" value="alpha/beta knot"/>
    <property type="match status" value="1"/>
</dbReference>
<sequence length="157" mass="18455">MTIKLVCIGKTDKKELEALIKIYSDRLQHYIKFEFEIIPDLKKTKNLDENQQKSKEGELILSGVQNSDFVVLLDENGKQFSSESFSEYIQKRMNTGLKRLIFVIGGPYGFSEEVYKRADSKISLSKMTFSHQMVRLFFTEQLYRAFTILKNEPYHHR</sequence>
<proteinExistence type="inferred from homology"/>